<gene>
    <name type="primary">SCPL32</name>
    <name type="ordered locus">At1g61130</name>
    <name type="ORF">F11P17.14</name>
</gene>
<keyword id="KW-0121">Carboxypeptidase</keyword>
<keyword id="KW-1015">Disulfide bond</keyword>
<keyword id="KW-0325">Glycoprotein</keyword>
<keyword id="KW-0378">Hydrolase</keyword>
<keyword id="KW-0645">Protease</keyword>
<keyword id="KW-1185">Reference proteome</keyword>
<keyword id="KW-0964">Secreted</keyword>
<keyword id="KW-0732">Signal</keyword>
<protein>
    <recommendedName>
        <fullName>Serine carboxypeptidase-like 32</fullName>
        <ecNumber>3.4.16.-</ecNumber>
    </recommendedName>
</protein>
<evidence type="ECO:0000250" key="1"/>
<evidence type="ECO:0000255" key="2"/>
<evidence type="ECO:0000255" key="3">
    <source>
        <dbReference type="PROSITE-ProRule" id="PRU10074"/>
    </source>
</evidence>
<evidence type="ECO:0000269" key="4">
    <source>
    </source>
</evidence>
<evidence type="ECO:0000305" key="5"/>
<organism>
    <name type="scientific">Arabidopsis thaliana</name>
    <name type="common">Mouse-ear cress</name>
    <dbReference type="NCBI Taxonomy" id="3702"/>
    <lineage>
        <taxon>Eukaryota</taxon>
        <taxon>Viridiplantae</taxon>
        <taxon>Streptophyta</taxon>
        <taxon>Embryophyta</taxon>
        <taxon>Tracheophyta</taxon>
        <taxon>Spermatophyta</taxon>
        <taxon>Magnoliopsida</taxon>
        <taxon>eudicotyledons</taxon>
        <taxon>Gunneridae</taxon>
        <taxon>Pentapetalae</taxon>
        <taxon>rosids</taxon>
        <taxon>malvids</taxon>
        <taxon>Brassicales</taxon>
        <taxon>Brassicaceae</taxon>
        <taxon>Camelineae</taxon>
        <taxon>Arabidopsis</taxon>
    </lineage>
</organism>
<reference key="1">
    <citation type="journal article" date="2000" name="Nature">
        <title>Sequence and analysis of chromosome 1 of the plant Arabidopsis thaliana.</title>
        <authorList>
            <person name="Theologis A."/>
            <person name="Ecker J.R."/>
            <person name="Palm C.J."/>
            <person name="Federspiel N.A."/>
            <person name="Kaul S."/>
            <person name="White O."/>
            <person name="Alonso J."/>
            <person name="Altafi H."/>
            <person name="Araujo R."/>
            <person name="Bowman C.L."/>
            <person name="Brooks S.Y."/>
            <person name="Buehler E."/>
            <person name="Chan A."/>
            <person name="Chao Q."/>
            <person name="Chen H."/>
            <person name="Cheuk R.F."/>
            <person name="Chin C.W."/>
            <person name="Chung M.K."/>
            <person name="Conn L."/>
            <person name="Conway A.B."/>
            <person name="Conway A.R."/>
            <person name="Creasy T.H."/>
            <person name="Dewar K."/>
            <person name="Dunn P."/>
            <person name="Etgu P."/>
            <person name="Feldblyum T.V."/>
            <person name="Feng J.-D."/>
            <person name="Fong B."/>
            <person name="Fujii C.Y."/>
            <person name="Gill J.E."/>
            <person name="Goldsmith A.D."/>
            <person name="Haas B."/>
            <person name="Hansen N.F."/>
            <person name="Hughes B."/>
            <person name="Huizar L."/>
            <person name="Hunter J.L."/>
            <person name="Jenkins J."/>
            <person name="Johnson-Hopson C."/>
            <person name="Khan S."/>
            <person name="Khaykin E."/>
            <person name="Kim C.J."/>
            <person name="Koo H.L."/>
            <person name="Kremenetskaia I."/>
            <person name="Kurtz D.B."/>
            <person name="Kwan A."/>
            <person name="Lam B."/>
            <person name="Langin-Hooper S."/>
            <person name="Lee A."/>
            <person name="Lee J.M."/>
            <person name="Lenz C.A."/>
            <person name="Li J.H."/>
            <person name="Li Y.-P."/>
            <person name="Lin X."/>
            <person name="Liu S.X."/>
            <person name="Liu Z.A."/>
            <person name="Luros J.S."/>
            <person name="Maiti R."/>
            <person name="Marziali A."/>
            <person name="Militscher J."/>
            <person name="Miranda M."/>
            <person name="Nguyen M."/>
            <person name="Nierman W.C."/>
            <person name="Osborne B.I."/>
            <person name="Pai G."/>
            <person name="Peterson J."/>
            <person name="Pham P.K."/>
            <person name="Rizzo M."/>
            <person name="Rooney T."/>
            <person name="Rowley D."/>
            <person name="Sakano H."/>
            <person name="Salzberg S.L."/>
            <person name="Schwartz J.R."/>
            <person name="Shinn P."/>
            <person name="Southwick A.M."/>
            <person name="Sun H."/>
            <person name="Tallon L.J."/>
            <person name="Tambunga G."/>
            <person name="Toriumi M.J."/>
            <person name="Town C.D."/>
            <person name="Utterback T."/>
            <person name="Van Aken S."/>
            <person name="Vaysberg M."/>
            <person name="Vysotskaia V.S."/>
            <person name="Walker M."/>
            <person name="Wu D."/>
            <person name="Yu G."/>
            <person name="Fraser C.M."/>
            <person name="Venter J.C."/>
            <person name="Davis R.W."/>
        </authorList>
    </citation>
    <scope>NUCLEOTIDE SEQUENCE [LARGE SCALE GENOMIC DNA]</scope>
    <source>
        <strain>cv. Columbia</strain>
    </source>
</reference>
<reference key="2">
    <citation type="journal article" date="2017" name="Plant J.">
        <title>Araport11: a complete reannotation of the Arabidopsis thaliana reference genome.</title>
        <authorList>
            <person name="Cheng C.Y."/>
            <person name="Krishnakumar V."/>
            <person name="Chan A.P."/>
            <person name="Thibaud-Nissen F."/>
            <person name="Schobel S."/>
            <person name="Town C.D."/>
        </authorList>
    </citation>
    <scope>GENOME REANNOTATION</scope>
    <source>
        <strain>cv. Columbia</strain>
    </source>
</reference>
<reference key="3">
    <citation type="submission" date="2005-05" db="EMBL/GenBank/DDBJ databases">
        <authorList>
            <person name="Underwood B.A."/>
            <person name="Xiao Y.-L."/>
            <person name="Moskal W.A. Jr."/>
            <person name="Monaghan E.L."/>
            <person name="Wang W."/>
            <person name="Redman J.C."/>
            <person name="Wu H.C."/>
            <person name="Utterback T."/>
            <person name="Town C.D."/>
        </authorList>
    </citation>
    <scope>NUCLEOTIDE SEQUENCE [LARGE SCALE MRNA]</scope>
    <source>
        <strain>cv. Columbia</strain>
    </source>
</reference>
<reference key="4">
    <citation type="journal article" date="2005" name="Plant Physiol.">
        <title>An expression and bioinformatics analysis of the Arabidopsis serine carboxypeptidase-like gene family.</title>
        <authorList>
            <person name="Fraser C.M."/>
            <person name="Rider L.W."/>
            <person name="Chapple C."/>
        </authorList>
    </citation>
    <scope>GENE FAMILY</scope>
    <scope>TISSUE SPECIFICITY</scope>
    <scope>NOMENCLATURE</scope>
</reference>
<proteinExistence type="evidence at transcript level"/>
<feature type="signal peptide" evidence="2">
    <location>
        <begin position="1"/>
        <end position="22"/>
    </location>
</feature>
<feature type="chain" id="PRO_0000274647" description="Serine carboxypeptidase-like 32">
    <location>
        <begin position="23"/>
        <end position="463"/>
    </location>
</feature>
<feature type="active site" evidence="3">
    <location>
        <position position="179"/>
    </location>
</feature>
<feature type="active site" evidence="3">
    <location>
        <position position="384"/>
    </location>
</feature>
<feature type="active site" evidence="3">
    <location>
        <position position="436"/>
    </location>
</feature>
<feature type="glycosylation site" description="N-linked (GlcNAc...) asparagine" evidence="2">
    <location>
        <position position="137"/>
    </location>
</feature>
<feature type="glycosylation site" description="N-linked (GlcNAc...) asparagine" evidence="2">
    <location>
        <position position="201"/>
    </location>
</feature>
<feature type="glycosylation site" description="N-linked (GlcNAc...) asparagine" evidence="2">
    <location>
        <position position="250"/>
    </location>
</feature>
<feature type="glycosylation site" description="N-linked (GlcNAc...) asparagine" evidence="2">
    <location>
        <position position="341"/>
    </location>
</feature>
<feature type="glycosylation site" description="N-linked (GlcNAc...) asparagine" evidence="2">
    <location>
        <position position="354"/>
    </location>
</feature>
<feature type="disulfide bond" evidence="1">
    <location>
        <begin position="86"/>
        <end position="345"/>
    </location>
</feature>
<feature type="disulfide bond" evidence="1">
    <location>
        <begin position="249"/>
        <end position="262"/>
    </location>
</feature>
<feature type="disulfide bond" evidence="1">
    <location>
        <begin position="286"/>
        <end position="313"/>
    </location>
</feature>
<sequence>MMNISNVSIALYLCTLFAFVSSDSPEAMRDLVTNFPGQPKVSFRHYAGYVTVNIISGRALFYWFFEAMTHPNVKPLVLWLNGGPGCSSVGYGATQEIGPFLVDNKGNSLKFNPYAWNKEANILFLESPAGVGFSYSNTSSDYRKLGDDFTARDSYTFLQKWFLRFPAYKEKDFFIAGESYAGKYVPELAEVIYDKNKDNENLSLHINLKGILLGNPLTSYAEDWTGWVDYAWNHAVVSDETYRVIKQSCNFSSDTTWDVKDCKEGVDEILKQYKEIDQFSLYTPICMHHSSKVDSYANYKTTIPRLFDGFDPCLDDYAKVFYNRADVQKALHATDGVHLKNWTICNDDILNHWNWTDSKRSVLPIYKKLIAGGFRVWVYSGDTDGRVPVLSTRYCINKLELPIKTAWRPWYHETQVSGWFQEYEGLTFATFRGAGHDVPSFKPSESLAFFSAFLNGVPPPLSR</sequence>
<accession>Q4PSY2</accession>
<accession>O22732</accession>
<dbReference type="EC" id="3.4.16.-"/>
<dbReference type="EMBL" id="AC002294">
    <property type="protein sequence ID" value="AAB71481.1"/>
    <property type="status" value="ALT_SEQ"/>
    <property type="molecule type" value="Genomic_DNA"/>
</dbReference>
<dbReference type="EMBL" id="CP002684">
    <property type="protein sequence ID" value="AEE33785.1"/>
    <property type="molecule type" value="Genomic_DNA"/>
</dbReference>
<dbReference type="EMBL" id="DQ056504">
    <property type="protein sequence ID" value="AAY78661.1"/>
    <property type="molecule type" value="mRNA"/>
</dbReference>
<dbReference type="PIR" id="B96637">
    <property type="entry name" value="B96637"/>
</dbReference>
<dbReference type="RefSeq" id="NP_176308.2">
    <property type="nucleotide sequence ID" value="NM_104794.3"/>
</dbReference>
<dbReference type="SMR" id="Q4PSY2"/>
<dbReference type="ESTHER" id="arath-SCP32">
    <property type="family name" value="Carboxypeptidase_S10"/>
</dbReference>
<dbReference type="MEROPS" id="S10.A26"/>
<dbReference type="GlyCosmos" id="Q4PSY2">
    <property type="glycosylation" value="5 sites, No reported glycans"/>
</dbReference>
<dbReference type="GlyGen" id="Q4PSY2">
    <property type="glycosylation" value="5 sites"/>
</dbReference>
<dbReference type="PaxDb" id="3702-AT1G61130.1"/>
<dbReference type="ProteomicsDB" id="232710"/>
<dbReference type="EnsemblPlants" id="AT1G61130.1">
    <property type="protein sequence ID" value="AT1G61130.1"/>
    <property type="gene ID" value="AT1G61130"/>
</dbReference>
<dbReference type="GeneID" id="842406"/>
<dbReference type="Gramene" id="AT1G61130.1">
    <property type="protein sequence ID" value="AT1G61130.1"/>
    <property type="gene ID" value="AT1G61130"/>
</dbReference>
<dbReference type="KEGG" id="ath:AT1G61130"/>
<dbReference type="Araport" id="AT1G61130"/>
<dbReference type="TAIR" id="AT1G61130">
    <property type="gene designation" value="SCPL32"/>
</dbReference>
<dbReference type="eggNOG" id="KOG1282">
    <property type="taxonomic scope" value="Eukaryota"/>
</dbReference>
<dbReference type="HOGENOM" id="CLU_008523_13_0_1"/>
<dbReference type="InParanoid" id="Q4PSY2"/>
<dbReference type="OMA" id="FLRFPAY"/>
<dbReference type="PhylomeDB" id="Q4PSY2"/>
<dbReference type="PRO" id="PR:Q4PSY2"/>
<dbReference type="Proteomes" id="UP000006548">
    <property type="component" value="Chromosome 1"/>
</dbReference>
<dbReference type="ExpressionAtlas" id="Q4PSY2">
    <property type="expression patterns" value="baseline and differential"/>
</dbReference>
<dbReference type="GO" id="GO:0005576">
    <property type="term" value="C:extracellular region"/>
    <property type="evidence" value="ECO:0007669"/>
    <property type="project" value="UniProtKB-SubCell"/>
</dbReference>
<dbReference type="GO" id="GO:0004185">
    <property type="term" value="F:serine-type carboxypeptidase activity"/>
    <property type="evidence" value="ECO:0007669"/>
    <property type="project" value="InterPro"/>
</dbReference>
<dbReference type="GO" id="GO:0006508">
    <property type="term" value="P:proteolysis"/>
    <property type="evidence" value="ECO:0007669"/>
    <property type="project" value="UniProtKB-KW"/>
</dbReference>
<dbReference type="FunFam" id="3.40.50.11320:FF:000001">
    <property type="entry name" value="Carboxypeptidase"/>
    <property type="match status" value="1"/>
</dbReference>
<dbReference type="FunFam" id="3.40.50.1820:FF:000030">
    <property type="entry name" value="Carboxypeptidase"/>
    <property type="match status" value="1"/>
</dbReference>
<dbReference type="Gene3D" id="3.40.50.11320">
    <property type="match status" value="1"/>
</dbReference>
<dbReference type="Gene3D" id="6.10.250.940">
    <property type="match status" value="1"/>
</dbReference>
<dbReference type="Gene3D" id="3.40.50.1820">
    <property type="entry name" value="alpha/beta hydrolase"/>
    <property type="match status" value="1"/>
</dbReference>
<dbReference type="InterPro" id="IPR029058">
    <property type="entry name" value="AB_hydrolase_fold"/>
</dbReference>
<dbReference type="InterPro" id="IPR001563">
    <property type="entry name" value="Peptidase_S10"/>
</dbReference>
<dbReference type="InterPro" id="IPR018202">
    <property type="entry name" value="Ser_caboxypep_ser_AS"/>
</dbReference>
<dbReference type="PANTHER" id="PTHR11802:SF15">
    <property type="entry name" value="SERINE CARBOXYPEPTIDASE-LIKE 32"/>
    <property type="match status" value="1"/>
</dbReference>
<dbReference type="PANTHER" id="PTHR11802">
    <property type="entry name" value="SERINE PROTEASE FAMILY S10 SERINE CARBOXYPEPTIDASE"/>
    <property type="match status" value="1"/>
</dbReference>
<dbReference type="Pfam" id="PF00450">
    <property type="entry name" value="Peptidase_S10"/>
    <property type="match status" value="1"/>
</dbReference>
<dbReference type="PRINTS" id="PR00724">
    <property type="entry name" value="CRBOXYPTASEC"/>
</dbReference>
<dbReference type="SUPFAM" id="SSF53474">
    <property type="entry name" value="alpha/beta-Hydrolases"/>
    <property type="match status" value="1"/>
</dbReference>
<dbReference type="PROSITE" id="PS00131">
    <property type="entry name" value="CARBOXYPEPT_SER_SER"/>
    <property type="match status" value="1"/>
</dbReference>
<comment type="function">
    <text evidence="1">Probable carboxypeptidase.</text>
</comment>
<comment type="subcellular location">
    <subcellularLocation>
        <location evidence="5">Secreted</location>
    </subcellularLocation>
</comment>
<comment type="tissue specificity">
    <text evidence="4">Expressed in flowers.</text>
</comment>
<comment type="similarity">
    <text evidence="5">Belongs to the peptidase S10 family.</text>
</comment>
<comment type="sequence caution" evidence="5">
    <conflict type="erroneous gene model prediction">
        <sequence resource="EMBL-CDS" id="AAB71481"/>
    </conflict>
</comment>
<name>SCP32_ARATH</name>